<gene>
    <name type="primary">yidC</name>
    <name type="ordered locus">MYCGA0090</name>
    <name type="ORF">MGA_0631</name>
</gene>
<reference key="1">
    <citation type="journal article" date="2003" name="Microbiology">
        <title>The complete genome sequence of the avian pathogen Mycoplasma gallisepticum strain R(low).</title>
        <authorList>
            <person name="Papazisi L."/>
            <person name="Gorton T.S."/>
            <person name="Kutish G."/>
            <person name="Markham P.F."/>
            <person name="Browning G.F."/>
            <person name="Nguyen D.K."/>
            <person name="Swartzell S."/>
            <person name="Madan A."/>
            <person name="Mahairas G."/>
            <person name="Geary S.J."/>
        </authorList>
    </citation>
    <scope>NUCLEOTIDE SEQUENCE [LARGE SCALE GENOMIC DNA]</scope>
    <source>
        <strain>R(low / passage 15 / clone 2)</strain>
    </source>
</reference>
<proteinExistence type="inferred from homology"/>
<evidence type="ECO:0000250" key="1"/>
<evidence type="ECO:0000255" key="2"/>
<evidence type="ECO:0000305" key="3"/>
<sequence>MNKVHSEIKTQSFNPFWNAATLKEKSRIDPNLKKALSYLWKFLKICVFLFLTVIGLWGCTQTYSEPWTVSNPRIGVGLEIGYNYGVTGDYRYDLTSSNIGPYFSFANYQLSYGPFLAWFVWPASQIILPILYQTRVPLTQGIDYGLNTILAILILLFIIRLITIGITLNSTLNTERMGEVQGKIAEINAKYKNATDTQSKKMKQIEVMHIYKKHKIKPAALFVQGFVTIPIFLIVYKMVSLTRPIKATILFGIWDLSVTPGTEIISDISRNWVYIFFVLLVVPMQIVSQWLPQFWATRRNRNAKTTSQKGLEQLKKTRRIQWILIFVFALFPVITPSAVGLYWFLNSIFTILQSYITHVFIVKRRQRTKTISRLDQILNRELD</sequence>
<feature type="chain" id="PRO_0000124723" description="Membrane protein insertase YidC">
    <location>
        <begin position="1"/>
        <end position="383"/>
    </location>
</feature>
<feature type="transmembrane region" description="Helical" evidence="2">
    <location>
        <begin position="39"/>
        <end position="59"/>
    </location>
</feature>
<feature type="transmembrane region" description="Helical" evidence="2">
    <location>
        <begin position="112"/>
        <end position="132"/>
    </location>
</feature>
<feature type="transmembrane region" description="Helical" evidence="2">
    <location>
        <begin position="148"/>
        <end position="168"/>
    </location>
</feature>
<feature type="transmembrane region" description="Helical" evidence="2">
    <location>
        <begin position="219"/>
        <end position="239"/>
    </location>
</feature>
<feature type="transmembrane region" description="Helical" evidence="2">
    <location>
        <begin position="245"/>
        <end position="265"/>
    </location>
</feature>
<feature type="transmembrane region" description="Helical" evidence="2">
    <location>
        <begin position="272"/>
        <end position="292"/>
    </location>
</feature>
<feature type="transmembrane region" description="Helical" evidence="2">
    <location>
        <begin position="322"/>
        <end position="342"/>
    </location>
</feature>
<feature type="transmembrane region" description="Helical" evidence="2">
    <location>
        <begin position="343"/>
        <end position="363"/>
    </location>
</feature>
<name>YIDC_MYCGA</name>
<protein>
    <recommendedName>
        <fullName>Membrane protein insertase YidC</fullName>
    </recommendedName>
    <alternativeName>
        <fullName>Foldase YidC</fullName>
    </alternativeName>
    <alternativeName>
        <fullName>Membrane integrase YidC</fullName>
    </alternativeName>
    <alternativeName>
        <fullName>Membrane protein YidC</fullName>
    </alternativeName>
</protein>
<organism>
    <name type="scientific">Mycoplasmoides gallisepticum (strain R(low / passage 15 / clone 2))</name>
    <name type="common">Mycoplasma gallisepticum</name>
    <dbReference type="NCBI Taxonomy" id="710127"/>
    <lineage>
        <taxon>Bacteria</taxon>
        <taxon>Bacillati</taxon>
        <taxon>Mycoplasmatota</taxon>
        <taxon>Mycoplasmoidales</taxon>
        <taxon>Mycoplasmoidaceae</taxon>
        <taxon>Mycoplasmoides</taxon>
    </lineage>
</organism>
<dbReference type="EMBL" id="AE015450">
    <property type="protein sequence ID" value="AAP56359.1"/>
    <property type="molecule type" value="Genomic_DNA"/>
</dbReference>
<dbReference type="RefSeq" id="WP_011113238.1">
    <property type="nucleotide sequence ID" value="NC_004829.2"/>
</dbReference>
<dbReference type="SMR" id="P60035"/>
<dbReference type="KEGG" id="mga:MGA_0631"/>
<dbReference type="HOGENOM" id="CLU_058030_0_0_14"/>
<dbReference type="OrthoDB" id="394558at2"/>
<dbReference type="Proteomes" id="UP000001418">
    <property type="component" value="Chromosome"/>
</dbReference>
<dbReference type="GO" id="GO:0005886">
    <property type="term" value="C:plasma membrane"/>
    <property type="evidence" value="ECO:0007669"/>
    <property type="project" value="UniProtKB-SubCell"/>
</dbReference>
<dbReference type="GO" id="GO:0032977">
    <property type="term" value="F:membrane insertase activity"/>
    <property type="evidence" value="ECO:0007669"/>
    <property type="project" value="InterPro"/>
</dbReference>
<dbReference type="GO" id="GO:0051205">
    <property type="term" value="P:protein insertion into membrane"/>
    <property type="evidence" value="ECO:0007669"/>
    <property type="project" value="TreeGrafter"/>
</dbReference>
<dbReference type="GO" id="GO:0015031">
    <property type="term" value="P:protein transport"/>
    <property type="evidence" value="ECO:0007669"/>
    <property type="project" value="UniProtKB-KW"/>
</dbReference>
<dbReference type="CDD" id="cd20070">
    <property type="entry name" value="5TM_YidC_Alb3"/>
    <property type="match status" value="1"/>
</dbReference>
<dbReference type="InterPro" id="IPR001708">
    <property type="entry name" value="YidC/ALB3/OXA1/COX18"/>
</dbReference>
<dbReference type="InterPro" id="IPR028055">
    <property type="entry name" value="YidC/Oxa/ALB_C"/>
</dbReference>
<dbReference type="InterPro" id="IPR047196">
    <property type="entry name" value="YidC_ALB_C"/>
</dbReference>
<dbReference type="NCBIfam" id="NF002566">
    <property type="entry name" value="PRK02201.1-1"/>
    <property type="match status" value="1"/>
</dbReference>
<dbReference type="NCBIfam" id="TIGR03592">
    <property type="entry name" value="yidC_oxa1_cterm"/>
    <property type="match status" value="1"/>
</dbReference>
<dbReference type="PANTHER" id="PTHR12428:SF65">
    <property type="entry name" value="CYTOCHROME C OXIDASE ASSEMBLY PROTEIN COX18, MITOCHONDRIAL"/>
    <property type="match status" value="1"/>
</dbReference>
<dbReference type="PANTHER" id="PTHR12428">
    <property type="entry name" value="OXA1"/>
    <property type="match status" value="1"/>
</dbReference>
<dbReference type="Pfam" id="PF02096">
    <property type="entry name" value="60KD_IMP"/>
    <property type="match status" value="1"/>
</dbReference>
<comment type="function">
    <text evidence="1">Required for the insertion and/or proper folding and/or complex formation of integral membrane proteins into the membrane. Involved in integration of membrane proteins that insert both dependently and independently of the Sec translocase complex, as well as at least some lipoproteins. Aids folding of multispanning membrane proteins (By similarity).</text>
</comment>
<comment type="subunit">
    <text evidence="1">Interacts with the Sec translocase complex via SecD. Specifically interacts with transmembrane segments of nascent integral membrane proteins during membrane integration (By similarity).</text>
</comment>
<comment type="subcellular location">
    <subcellularLocation>
        <location evidence="1">Cell membrane</location>
        <topology evidence="1">Multi-pass membrane protein</topology>
    </subcellularLocation>
</comment>
<comment type="similarity">
    <text evidence="3">Belongs to the OXA1/ALB3/YidC family. Type 1 subfamily.</text>
</comment>
<keyword id="KW-1003">Cell membrane</keyword>
<keyword id="KW-0143">Chaperone</keyword>
<keyword id="KW-0472">Membrane</keyword>
<keyword id="KW-0653">Protein transport</keyword>
<keyword id="KW-1185">Reference proteome</keyword>
<keyword id="KW-0812">Transmembrane</keyword>
<keyword id="KW-1133">Transmembrane helix</keyword>
<keyword id="KW-0813">Transport</keyword>
<accession>P60035</accession>